<accession>Q3IIY4</accession>
<comment type="function">
    <text evidence="1">Catalyzes the N-acylation of UDP-3-O-acylglucosamine using 3-hydroxyacyl-ACP as the acyl donor. Is involved in the biosynthesis of lipid A, a phosphorylated glycolipid that anchors the lipopolysaccharide to the outer membrane of the cell.</text>
</comment>
<comment type="catalytic activity">
    <reaction evidence="1">
        <text>a UDP-3-O-[(3R)-3-hydroxyacyl]-alpha-D-glucosamine + a (3R)-hydroxyacyl-[ACP] = a UDP-2-N,3-O-bis[(3R)-3-hydroxyacyl]-alpha-D-glucosamine + holo-[ACP] + H(+)</text>
        <dbReference type="Rhea" id="RHEA:53836"/>
        <dbReference type="Rhea" id="RHEA-COMP:9685"/>
        <dbReference type="Rhea" id="RHEA-COMP:9945"/>
        <dbReference type="ChEBI" id="CHEBI:15378"/>
        <dbReference type="ChEBI" id="CHEBI:64479"/>
        <dbReference type="ChEBI" id="CHEBI:78827"/>
        <dbReference type="ChEBI" id="CHEBI:137740"/>
        <dbReference type="ChEBI" id="CHEBI:137748"/>
        <dbReference type="EC" id="2.3.1.191"/>
    </reaction>
</comment>
<comment type="pathway">
    <text evidence="1">Bacterial outer membrane biogenesis; LPS lipid A biosynthesis.</text>
</comment>
<comment type="subunit">
    <text evidence="1">Homotrimer.</text>
</comment>
<comment type="similarity">
    <text evidence="1">Belongs to the transferase hexapeptide repeat family. LpxD subfamily.</text>
</comment>
<gene>
    <name evidence="1" type="primary">lpxD</name>
    <name type="ordered locus">PSHAa2026</name>
</gene>
<dbReference type="EC" id="2.3.1.191" evidence="1"/>
<dbReference type="EMBL" id="CR954246">
    <property type="protein sequence ID" value="CAI87082.1"/>
    <property type="molecule type" value="Genomic_DNA"/>
</dbReference>
<dbReference type="SMR" id="Q3IIY4"/>
<dbReference type="STRING" id="326442.PSHAa2026"/>
<dbReference type="KEGG" id="pha:PSHAa2026"/>
<dbReference type="PATRIC" id="fig|326442.8.peg.1954"/>
<dbReference type="eggNOG" id="COG1044">
    <property type="taxonomic scope" value="Bacteria"/>
</dbReference>
<dbReference type="HOGENOM" id="CLU_049865_0_1_6"/>
<dbReference type="BioCyc" id="PHAL326442:PSHA_RS10010-MONOMER"/>
<dbReference type="UniPathway" id="UPA00973"/>
<dbReference type="Proteomes" id="UP000006843">
    <property type="component" value="Chromosome I"/>
</dbReference>
<dbReference type="GO" id="GO:0016020">
    <property type="term" value="C:membrane"/>
    <property type="evidence" value="ECO:0007669"/>
    <property type="project" value="GOC"/>
</dbReference>
<dbReference type="GO" id="GO:0016410">
    <property type="term" value="F:N-acyltransferase activity"/>
    <property type="evidence" value="ECO:0007669"/>
    <property type="project" value="InterPro"/>
</dbReference>
<dbReference type="GO" id="GO:0009245">
    <property type="term" value="P:lipid A biosynthetic process"/>
    <property type="evidence" value="ECO:0007669"/>
    <property type="project" value="UniProtKB-UniRule"/>
</dbReference>
<dbReference type="CDD" id="cd03352">
    <property type="entry name" value="LbH_LpxD"/>
    <property type="match status" value="1"/>
</dbReference>
<dbReference type="Gene3D" id="1.20.5.170">
    <property type="match status" value="1"/>
</dbReference>
<dbReference type="Gene3D" id="2.160.10.10">
    <property type="entry name" value="Hexapeptide repeat proteins"/>
    <property type="match status" value="1"/>
</dbReference>
<dbReference type="Gene3D" id="3.40.1390.10">
    <property type="entry name" value="MurE/MurF, N-terminal domain"/>
    <property type="match status" value="1"/>
</dbReference>
<dbReference type="HAMAP" id="MF_00523">
    <property type="entry name" value="LpxD"/>
    <property type="match status" value="1"/>
</dbReference>
<dbReference type="InterPro" id="IPR001451">
    <property type="entry name" value="Hexapep"/>
</dbReference>
<dbReference type="InterPro" id="IPR007691">
    <property type="entry name" value="LpxD"/>
</dbReference>
<dbReference type="InterPro" id="IPR011004">
    <property type="entry name" value="Trimer_LpxA-like_sf"/>
</dbReference>
<dbReference type="InterPro" id="IPR020573">
    <property type="entry name" value="UDP_GlcNAc_AcTrfase_non-rep"/>
</dbReference>
<dbReference type="NCBIfam" id="TIGR01853">
    <property type="entry name" value="lipid_A_lpxD"/>
    <property type="match status" value="1"/>
</dbReference>
<dbReference type="NCBIfam" id="NF002060">
    <property type="entry name" value="PRK00892.1"/>
    <property type="match status" value="1"/>
</dbReference>
<dbReference type="PANTHER" id="PTHR43378">
    <property type="entry name" value="UDP-3-O-ACYLGLUCOSAMINE N-ACYLTRANSFERASE"/>
    <property type="match status" value="1"/>
</dbReference>
<dbReference type="PANTHER" id="PTHR43378:SF2">
    <property type="entry name" value="UDP-3-O-ACYLGLUCOSAMINE N-ACYLTRANSFERASE 1, MITOCHONDRIAL-RELATED"/>
    <property type="match status" value="1"/>
</dbReference>
<dbReference type="Pfam" id="PF00132">
    <property type="entry name" value="Hexapep"/>
    <property type="match status" value="1"/>
</dbReference>
<dbReference type="Pfam" id="PF04613">
    <property type="entry name" value="LpxD"/>
    <property type="match status" value="1"/>
</dbReference>
<dbReference type="SUPFAM" id="SSF51161">
    <property type="entry name" value="Trimeric LpxA-like enzymes"/>
    <property type="match status" value="1"/>
</dbReference>
<keyword id="KW-0012">Acyltransferase</keyword>
<keyword id="KW-0441">Lipid A biosynthesis</keyword>
<keyword id="KW-0444">Lipid biosynthesis</keyword>
<keyword id="KW-0443">Lipid metabolism</keyword>
<keyword id="KW-1185">Reference proteome</keyword>
<keyword id="KW-0677">Repeat</keyword>
<keyword id="KW-0808">Transferase</keyword>
<name>LPXD_PSET1</name>
<proteinExistence type="inferred from homology"/>
<organism>
    <name type="scientific">Pseudoalteromonas translucida (strain TAC 125)</name>
    <dbReference type="NCBI Taxonomy" id="326442"/>
    <lineage>
        <taxon>Bacteria</taxon>
        <taxon>Pseudomonadati</taxon>
        <taxon>Pseudomonadota</taxon>
        <taxon>Gammaproteobacteria</taxon>
        <taxon>Alteromonadales</taxon>
        <taxon>Pseudoalteromonadaceae</taxon>
        <taxon>Pseudoalteromonas</taxon>
    </lineage>
</organism>
<evidence type="ECO:0000255" key="1">
    <source>
        <dbReference type="HAMAP-Rule" id="MF_00523"/>
    </source>
</evidence>
<sequence length="340" mass="35905">MQNYTLSQIAELLSAELQGDGALEITKIATLAHARSGHIAFLANKKYRSQLEVTQASAVIVSEADAPYFNGNKLIVANPYVSYAKLAQLMDTTPRSAATGIHPSAVVHPNATVSKSAAIGANTVIESNAIINDNVQIGPNSFIGEGVKIGSGTKLWSNVTIYHNVEIGSDCLLQANSVIGSDGFGYANERGQWIKIPQLGSVIIGDKVEIGASTTIDRGALDDTIIHSNVIIDNQCQIAHNVEVNSGTAIAGCTVLAGSVTIGKNCQIGGMTAINGHMSVCDGVIITGMSMVTKSITEPGIYSSGIPHTTNKEWRKSIAHLRNLSEMKSRIKALEQLNKP</sequence>
<feature type="chain" id="PRO_0000264412" description="UDP-3-O-acylglucosamine N-acyltransferase">
    <location>
        <begin position="1"/>
        <end position="340"/>
    </location>
</feature>
<feature type="active site" description="Proton acceptor" evidence="1">
    <location>
        <position position="240"/>
    </location>
</feature>
<protein>
    <recommendedName>
        <fullName evidence="1">UDP-3-O-acylglucosamine N-acyltransferase</fullName>
        <ecNumber evidence="1">2.3.1.191</ecNumber>
    </recommendedName>
</protein>
<reference key="1">
    <citation type="journal article" date="2005" name="Genome Res.">
        <title>Coping with cold: the genome of the versatile marine Antarctica bacterium Pseudoalteromonas haloplanktis TAC125.</title>
        <authorList>
            <person name="Medigue C."/>
            <person name="Krin E."/>
            <person name="Pascal G."/>
            <person name="Barbe V."/>
            <person name="Bernsel A."/>
            <person name="Bertin P.N."/>
            <person name="Cheung F."/>
            <person name="Cruveiller S."/>
            <person name="D'Amico S."/>
            <person name="Duilio A."/>
            <person name="Fang G."/>
            <person name="Feller G."/>
            <person name="Ho C."/>
            <person name="Mangenot S."/>
            <person name="Marino G."/>
            <person name="Nilsson J."/>
            <person name="Parrilli E."/>
            <person name="Rocha E.P.C."/>
            <person name="Rouy Z."/>
            <person name="Sekowska A."/>
            <person name="Tutino M.L."/>
            <person name="Vallenet D."/>
            <person name="von Heijne G."/>
            <person name="Danchin A."/>
        </authorList>
    </citation>
    <scope>NUCLEOTIDE SEQUENCE [LARGE SCALE GENOMIC DNA]</scope>
    <source>
        <strain>TAC 125</strain>
    </source>
</reference>